<name>XYLA_BRUC2</name>
<sequence length="435" mass="49000">MSTGFFGDIQKVRYEGPESDNPLAFRHYNADEIVLGKRMEDHLRFAVAYWHSFAWEGGDPFGGRPFDRPWFSNEIDAAKLKADVAFEFFSLLGAPYYCFHDADVRPEGRNFAENTRYLNEIVDIFEKKQAETGMKLLWGTANLFSNRRYMAGAATNPDPDVFAFAAATVKTCIDATKRLGGENYVLWGGREGYETLLNTDLSRELDHMGRFLSLVVEYKHKIGFKGTILIEPKPQEPTKHQYDYDVATVYGFLKRYGLENEVKVNIEQGHAILAGHSFEHELALARTLGIFGSIDMNRNDYQSGWDTDQFPNNVPEMALAYYQVLLAGGFTTGGTNFDAKLRRQSLDPQDLLIGHIGGMDCCARGLKAAARMLEDGALSKPLDERYAGWNGEFGKRLLSGLSLDQIAGEVEAKDINPQPKSGRQEYLENIVNRYV</sequence>
<protein>
    <recommendedName>
        <fullName evidence="1">Xylose isomerase</fullName>
        <ecNumber evidence="1">5.3.1.5</ecNumber>
    </recommendedName>
</protein>
<keyword id="KW-0119">Carbohydrate metabolism</keyword>
<keyword id="KW-0963">Cytoplasm</keyword>
<keyword id="KW-0413">Isomerase</keyword>
<keyword id="KW-0460">Magnesium</keyword>
<keyword id="KW-0479">Metal-binding</keyword>
<keyword id="KW-1185">Reference proteome</keyword>
<keyword id="KW-0859">Xylose metabolism</keyword>
<evidence type="ECO:0000255" key="1">
    <source>
        <dbReference type="HAMAP-Rule" id="MF_00455"/>
    </source>
</evidence>
<reference key="1">
    <citation type="submission" date="2007-10" db="EMBL/GenBank/DDBJ databases">
        <title>Brucella canis ATCC 23365 whole genome shotgun sequencing project.</title>
        <authorList>
            <person name="Setubal J.C."/>
            <person name="Bowns C."/>
            <person name="Boyle S."/>
            <person name="Crasta O.R."/>
            <person name="Czar M.J."/>
            <person name="Dharmanolla C."/>
            <person name="Gillespie J.J."/>
            <person name="Kenyon R.W."/>
            <person name="Lu J."/>
            <person name="Mane S."/>
            <person name="Mohapatra S."/>
            <person name="Nagrani S."/>
            <person name="Purkayastha A."/>
            <person name="Rajasimha H.K."/>
            <person name="Shallom J.M."/>
            <person name="Shallom S."/>
            <person name="Shukla M."/>
            <person name="Snyder E.E."/>
            <person name="Sobral B.W."/>
            <person name="Wattam A.R."/>
            <person name="Will R."/>
            <person name="Williams K."/>
            <person name="Yoo H."/>
            <person name="Bruce D."/>
            <person name="Detter C."/>
            <person name="Munk C."/>
            <person name="Brettin T.S."/>
        </authorList>
    </citation>
    <scope>NUCLEOTIDE SEQUENCE [LARGE SCALE GENOMIC DNA]</scope>
    <source>
        <strain>ATCC 23365 / NCTC 10854 / RM-666</strain>
    </source>
</reference>
<proteinExistence type="inferred from homology"/>
<accession>A9M9H3</accession>
<gene>
    <name evidence="1" type="primary">xylA</name>
    <name type="ordered locus">BCAN_A0560</name>
</gene>
<feature type="chain" id="PRO_1000081025" description="Xylose isomerase">
    <location>
        <begin position="1"/>
        <end position="435"/>
    </location>
</feature>
<feature type="active site" evidence="1">
    <location>
        <position position="100"/>
    </location>
</feature>
<feature type="active site" evidence="1">
    <location>
        <position position="103"/>
    </location>
</feature>
<feature type="binding site" evidence="1">
    <location>
        <position position="231"/>
    </location>
    <ligand>
        <name>Mg(2+)</name>
        <dbReference type="ChEBI" id="CHEBI:18420"/>
        <label>1</label>
    </ligand>
</feature>
<feature type="binding site" evidence="1">
    <location>
        <position position="267"/>
    </location>
    <ligand>
        <name>Mg(2+)</name>
        <dbReference type="ChEBI" id="CHEBI:18420"/>
        <label>1</label>
    </ligand>
</feature>
<feature type="binding site" evidence="1">
    <location>
        <position position="267"/>
    </location>
    <ligand>
        <name>Mg(2+)</name>
        <dbReference type="ChEBI" id="CHEBI:18420"/>
        <label>2</label>
    </ligand>
</feature>
<feature type="binding site" evidence="1">
    <location>
        <position position="270"/>
    </location>
    <ligand>
        <name>Mg(2+)</name>
        <dbReference type="ChEBI" id="CHEBI:18420"/>
        <label>2</label>
    </ligand>
</feature>
<feature type="binding site" evidence="1">
    <location>
        <position position="295"/>
    </location>
    <ligand>
        <name>Mg(2+)</name>
        <dbReference type="ChEBI" id="CHEBI:18420"/>
        <label>1</label>
    </ligand>
</feature>
<feature type="binding site" evidence="1">
    <location>
        <position position="306"/>
    </location>
    <ligand>
        <name>Mg(2+)</name>
        <dbReference type="ChEBI" id="CHEBI:18420"/>
        <label>2</label>
    </ligand>
</feature>
<feature type="binding site" evidence="1">
    <location>
        <position position="308"/>
    </location>
    <ligand>
        <name>Mg(2+)</name>
        <dbReference type="ChEBI" id="CHEBI:18420"/>
        <label>2</label>
    </ligand>
</feature>
<feature type="binding site" evidence="1">
    <location>
        <position position="338"/>
    </location>
    <ligand>
        <name>Mg(2+)</name>
        <dbReference type="ChEBI" id="CHEBI:18420"/>
        <label>1</label>
    </ligand>
</feature>
<comment type="catalytic activity">
    <reaction evidence="1">
        <text>alpha-D-xylose = alpha-D-xylulofuranose</text>
        <dbReference type="Rhea" id="RHEA:22816"/>
        <dbReference type="ChEBI" id="CHEBI:28518"/>
        <dbReference type="ChEBI" id="CHEBI:188998"/>
        <dbReference type="EC" id="5.3.1.5"/>
    </reaction>
</comment>
<comment type="cofactor">
    <cofactor evidence="1">
        <name>Mg(2+)</name>
        <dbReference type="ChEBI" id="CHEBI:18420"/>
    </cofactor>
    <text evidence="1">Binds 2 magnesium ions per subunit.</text>
</comment>
<comment type="subunit">
    <text evidence="1">Homotetramer.</text>
</comment>
<comment type="subcellular location">
    <subcellularLocation>
        <location evidence="1">Cytoplasm</location>
    </subcellularLocation>
</comment>
<comment type="similarity">
    <text evidence="1">Belongs to the xylose isomerase family.</text>
</comment>
<organism>
    <name type="scientific">Brucella canis (strain ATCC 23365 / NCTC 10854 / RM-666)</name>
    <dbReference type="NCBI Taxonomy" id="483179"/>
    <lineage>
        <taxon>Bacteria</taxon>
        <taxon>Pseudomonadati</taxon>
        <taxon>Pseudomonadota</taxon>
        <taxon>Alphaproteobacteria</taxon>
        <taxon>Hyphomicrobiales</taxon>
        <taxon>Brucellaceae</taxon>
        <taxon>Brucella/Ochrobactrum group</taxon>
        <taxon>Brucella</taxon>
    </lineage>
</organism>
<dbReference type="EC" id="5.3.1.5" evidence="1"/>
<dbReference type="EMBL" id="CP000872">
    <property type="protein sequence ID" value="ABX61637.1"/>
    <property type="molecule type" value="Genomic_DNA"/>
</dbReference>
<dbReference type="RefSeq" id="WP_004691947.1">
    <property type="nucleotide sequence ID" value="NC_010103.1"/>
</dbReference>
<dbReference type="SMR" id="A9M9H3"/>
<dbReference type="GeneID" id="55590284"/>
<dbReference type="KEGG" id="bcs:BCAN_A0560"/>
<dbReference type="HOGENOM" id="CLU_037261_1_0_5"/>
<dbReference type="Proteomes" id="UP000001385">
    <property type="component" value="Chromosome I"/>
</dbReference>
<dbReference type="GO" id="GO:0005737">
    <property type="term" value="C:cytoplasm"/>
    <property type="evidence" value="ECO:0007669"/>
    <property type="project" value="UniProtKB-SubCell"/>
</dbReference>
<dbReference type="GO" id="GO:0000287">
    <property type="term" value="F:magnesium ion binding"/>
    <property type="evidence" value="ECO:0007669"/>
    <property type="project" value="UniProtKB-UniRule"/>
</dbReference>
<dbReference type="GO" id="GO:0009045">
    <property type="term" value="F:xylose isomerase activity"/>
    <property type="evidence" value="ECO:0007669"/>
    <property type="project" value="UniProtKB-UniRule"/>
</dbReference>
<dbReference type="GO" id="GO:0042732">
    <property type="term" value="P:D-xylose metabolic process"/>
    <property type="evidence" value="ECO:0007669"/>
    <property type="project" value="UniProtKB-UniRule"/>
</dbReference>
<dbReference type="FunFam" id="3.20.20.150:FF:000002">
    <property type="entry name" value="Xylose isomerase"/>
    <property type="match status" value="1"/>
</dbReference>
<dbReference type="Gene3D" id="3.20.20.150">
    <property type="entry name" value="Divalent-metal-dependent TIM barrel enzymes"/>
    <property type="match status" value="1"/>
</dbReference>
<dbReference type="HAMAP" id="MF_00455">
    <property type="entry name" value="Xylose_isom_A"/>
    <property type="match status" value="1"/>
</dbReference>
<dbReference type="InterPro" id="IPR036237">
    <property type="entry name" value="Xyl_isomerase-like_sf"/>
</dbReference>
<dbReference type="InterPro" id="IPR013452">
    <property type="entry name" value="Xylose_isom_bac"/>
</dbReference>
<dbReference type="InterPro" id="IPR001998">
    <property type="entry name" value="Xylose_isomerase"/>
</dbReference>
<dbReference type="NCBIfam" id="NF003998">
    <property type="entry name" value="PRK05474.1"/>
    <property type="match status" value="1"/>
</dbReference>
<dbReference type="NCBIfam" id="TIGR02630">
    <property type="entry name" value="xylose_isom_A"/>
    <property type="match status" value="1"/>
</dbReference>
<dbReference type="PANTHER" id="PTHR48408">
    <property type="match status" value="1"/>
</dbReference>
<dbReference type="PANTHER" id="PTHR48408:SF1">
    <property type="entry name" value="XYLOSE ISOMERASE"/>
    <property type="match status" value="1"/>
</dbReference>
<dbReference type="PRINTS" id="PR00688">
    <property type="entry name" value="XYLOSISMRASE"/>
</dbReference>
<dbReference type="SUPFAM" id="SSF51658">
    <property type="entry name" value="Xylose isomerase-like"/>
    <property type="match status" value="1"/>
</dbReference>
<dbReference type="PROSITE" id="PS51415">
    <property type="entry name" value="XYLOSE_ISOMERASE"/>
    <property type="match status" value="1"/>
</dbReference>